<protein>
    <recommendedName>
        <fullName>Mu-agatoxin-Hc1b</fullName>
        <shortName>Mu-AGTX-Hc1b</shortName>
    </recommendedName>
    <alternativeName>
        <fullName evidence="3">Curtatoxin-2</fullName>
        <shortName evidence="3">CT-II</shortName>
    </alternativeName>
</protein>
<evidence type="ECO:0000250" key="1"/>
<evidence type="ECO:0000269" key="2">
    <source>
    </source>
</evidence>
<evidence type="ECO:0000303" key="3">
    <source>
    </source>
</evidence>
<evidence type="ECO:0000305" key="4"/>
<evidence type="ECO:0000305" key="5">
    <source>
    </source>
</evidence>
<dbReference type="PIR" id="B35030">
    <property type="entry name" value="B35030"/>
</dbReference>
<dbReference type="SMR" id="P60177"/>
<dbReference type="ArachnoServer" id="AS000295">
    <property type="toxin name" value="mu-agatoxin-Hc1b"/>
</dbReference>
<dbReference type="GO" id="GO:0005576">
    <property type="term" value="C:extracellular region"/>
    <property type="evidence" value="ECO:0007669"/>
    <property type="project" value="UniProtKB-SubCell"/>
</dbReference>
<dbReference type="GO" id="GO:0017080">
    <property type="term" value="F:sodium channel regulator activity"/>
    <property type="evidence" value="ECO:0007669"/>
    <property type="project" value="UniProtKB-KW"/>
</dbReference>
<dbReference type="GO" id="GO:0090729">
    <property type="term" value="F:toxin activity"/>
    <property type="evidence" value="ECO:0007669"/>
    <property type="project" value="UniProtKB-KW"/>
</dbReference>
<dbReference type="InterPro" id="IPR016328">
    <property type="entry name" value="Beta/delta-agatoxin_fam"/>
</dbReference>
<dbReference type="Pfam" id="PF05980">
    <property type="entry name" value="Toxin_7"/>
    <property type="match status" value="1"/>
</dbReference>
<dbReference type="PIRSF" id="PIRSF001882">
    <property type="entry name" value="Curtatoxin"/>
    <property type="match status" value="1"/>
</dbReference>
<dbReference type="SUPFAM" id="SSF57059">
    <property type="entry name" value="omega toxin-like"/>
    <property type="match status" value="1"/>
</dbReference>
<dbReference type="PROSITE" id="PS60015">
    <property type="entry name" value="MU_AGATOXIN"/>
    <property type="match status" value="1"/>
</dbReference>
<keyword id="KW-0027">Amidation</keyword>
<keyword id="KW-0903">Direct protein sequencing</keyword>
<keyword id="KW-1015">Disulfide bond</keyword>
<keyword id="KW-0872">Ion channel impairing toxin</keyword>
<keyword id="KW-0960">Knottin</keyword>
<keyword id="KW-0528">Neurotoxin</keyword>
<keyword id="KW-0964">Secreted</keyword>
<keyword id="KW-0800">Toxin</keyword>
<keyword id="KW-0738">Voltage-gated sodium channel impairing toxin</keyword>
<feature type="peptide" id="PRO_0000044956" description="Mu-agatoxin-Hc1b">
    <location>
        <begin position="1"/>
        <end position="38"/>
    </location>
</feature>
<feature type="modified residue" description="Serine amide" evidence="2">
    <location>
        <position position="38"/>
    </location>
</feature>
<feature type="disulfide bond" evidence="1">
    <location>
        <begin position="3"/>
        <end position="19"/>
    </location>
</feature>
<feature type="disulfide bond" evidence="1">
    <location>
        <begin position="10"/>
        <end position="24"/>
    </location>
</feature>
<feature type="disulfide bond" evidence="1">
    <location>
        <begin position="18"/>
        <end position="34"/>
    </location>
</feature>
<feature type="disulfide bond" evidence="1">
    <location>
        <begin position="26"/>
        <end position="32"/>
    </location>
</feature>
<proteinExistence type="evidence at protein level"/>
<accession>P60177</accession>
<accession>P11059</accession>
<organism>
    <name type="scientific">Hololena curta</name>
    <name type="common">Funnel-web spider</name>
    <name type="synonym">Agelena curta</name>
    <dbReference type="NCBI Taxonomy" id="6910"/>
    <lineage>
        <taxon>Eukaryota</taxon>
        <taxon>Metazoa</taxon>
        <taxon>Ecdysozoa</taxon>
        <taxon>Arthropoda</taxon>
        <taxon>Chelicerata</taxon>
        <taxon>Arachnida</taxon>
        <taxon>Araneae</taxon>
        <taxon>Araneomorphae</taxon>
        <taxon>Entelegynae</taxon>
        <taxon>Agelenidae</taxon>
        <taxon>Hololena</taxon>
    </lineage>
</organism>
<sequence length="38" mass="4197">ADCVGDGQRCADWAGPYCCSGYYCSCRSMPYCRCRSDS</sequence>
<name>T3C2_HOLCU</name>
<comment type="function">
    <text evidence="2">Insecticidal neurotoxin that induces irreversible neuromuscular blockade in house crickets (A.domesticus). Modifies presynaptic voltage-gated sodium channels (Nav), causing them to open at the normal resting potential of the nerve. This leads to spontaneous release of neurotransmitter and repetitive action potentials in motor neurons.</text>
</comment>
<comment type="subcellular location">
    <subcellularLocation>
        <location evidence="2">Secreted</location>
    </subcellularLocation>
</comment>
<comment type="tissue specificity">
    <text evidence="5">Expressed by the venom gland.</text>
</comment>
<comment type="domain">
    <text evidence="1">The presence of a 'disulfide through disulfide knot' structurally defines this protein as a knottin.</text>
</comment>
<comment type="toxic dose">
    <text evidence="2">LD(50) is 4 mg/kg in house crickets (Acheta domesticus).</text>
</comment>
<comment type="similarity">
    <text evidence="4">Belongs to the neurotoxin 07 (Beta/delta-agtx) family. 02 (aga-3) subfamily.</text>
</comment>
<reference key="1">
    <citation type="journal article" date="1990" name="J. Biol. Chem.">
        <title>Curtatoxins. Neurotoxic insecticidal polypeptides isolated from the funnel-web spider Hololena curta.</title>
        <authorList>
            <person name="Stapleton A."/>
            <person name="Blankenship D.T."/>
            <person name="Ackermann D.L."/>
            <person name="Chen T.-M."/>
            <person name="Gorder G.W."/>
            <person name="Manley G.D."/>
            <person name="Palfreyman M.G."/>
            <person name="Coutant J.E."/>
            <person name="Cardin A.D."/>
        </authorList>
    </citation>
    <scope>PROTEIN SEQUENCE</scope>
    <scope>FUNCTION</scope>
    <scope>SUBCELLULAR LOCATION</scope>
    <scope>AMIDATION AT SER-38</scope>
    <scope>TOXIC DOSE</scope>
    <source>
        <tissue>Venom</tissue>
    </source>
</reference>
<reference key="2">
    <citation type="journal article" date="2004" name="Toxicon">
        <title>Agatoxins: ion channel specific toxins from the American funnel web spider, Agelenopsis aperta.</title>
        <authorList>
            <person name="Adams M.E."/>
        </authorList>
    </citation>
    <scope>REVIEW</scope>
</reference>
<reference key="3">
    <citation type="journal article" date="1991" name="Toxicon">
        <title>Paralytic and insecticidal toxins from the funnel web spider, Hololena curta.</title>
        <authorList>
            <person name="Quistad G.B."/>
            <person name="Reuter C.C."/>
            <person name="Skinner W.S."/>
            <person name="Dennis P.A."/>
            <person name="Suwanrumpha S."/>
            <person name="Fu E.W."/>
        </authorList>
    </citation>
    <scope>PROTEIN SEQUENCE</scope>
    <source>
        <tissue>Venom</tissue>
    </source>
</reference>